<sequence>MAREFSLEKTRNIGIMAHVDAGKTTTTERILYYTGKIHKIGETHEGASQMDWMEQEQERGITITSAATTAQWNNHRVNIIDTPGHVDFTIEVQRSLRVLDGAVTVLDSQSGVEPQTETVWRQATEYGVPRIVFANKMDKIGADFLYSVSTLHDRLQANAHPIQLPIGAEDDFRGIIDLIKMKAEIYTNDLGTDILEEDIPAEYLEQAQEYREKLVEAVAETDEDLMMKYLEGEEITNEELKAGIRKATINVEFFPVLCGSAFKNKGVQLMLDAVIDYLPSPLDIPAIKGINPDTDEEETRPASDEEPFAALAFKIMTDPFVGRLTFFRVYSGVLQSGSYVLNTSKGKRERIGRILQMHANSRQEIETVYAGDIAAAVGLKDTTTGDSLTDEKAKIILESINVPEPVIQLMVEPKSKADQDKMGVALQKLAEEDPTFRVETNVETGETVISGMGELHLDVLVDRMRREFKVEANVGAPQVSYRETFRASTQARGFFKRQSGGKGQFGDVWIEFTPNEEGKGFEFENAIVGGVVPREFIPAVEKGLVESMANGVLAGYPIVDVKAKLYDGSYHDVDSSETAFKVAASLALKEAAKTAQPAILEPMMLVTITVPEENLGDVMGHVTARRGRVDGMEAHGNSQIVRAYVPLAEMFGYATVLRSASQGRGTFMMVFDHYEDVPKSVQEEIIKKHKGEA</sequence>
<protein>
    <recommendedName>
        <fullName evidence="1">Elongation factor G</fullName>
        <shortName evidence="1">EF-G</shortName>
    </recommendedName>
</protein>
<gene>
    <name evidence="1" type="primary">fusA</name>
    <name type="ordered locus">SGO_0206</name>
</gene>
<keyword id="KW-0963">Cytoplasm</keyword>
<keyword id="KW-0251">Elongation factor</keyword>
<keyword id="KW-0342">GTP-binding</keyword>
<keyword id="KW-0547">Nucleotide-binding</keyword>
<keyword id="KW-0648">Protein biosynthesis</keyword>
<keyword id="KW-1185">Reference proteome</keyword>
<proteinExistence type="inferred from homology"/>
<reference key="1">
    <citation type="journal article" date="2007" name="J. Bacteriol.">
        <title>Genome-wide transcriptional changes in Streptococcus gordonii in response to competence signaling peptide.</title>
        <authorList>
            <person name="Vickerman M.M."/>
            <person name="Iobst S."/>
            <person name="Jesionowski A.M."/>
            <person name="Gill S.R."/>
        </authorList>
    </citation>
    <scope>NUCLEOTIDE SEQUENCE [LARGE SCALE GENOMIC DNA]</scope>
    <source>
        <strain>Challis / ATCC 35105 / BCRC 15272 / CH1 / DL1 / V288</strain>
    </source>
</reference>
<name>EFG_STRGC</name>
<accession>A8AUR6</accession>
<organism>
    <name type="scientific">Streptococcus gordonii (strain Challis / ATCC 35105 / BCRC 15272 / CH1 / DL1 / V288)</name>
    <dbReference type="NCBI Taxonomy" id="467705"/>
    <lineage>
        <taxon>Bacteria</taxon>
        <taxon>Bacillati</taxon>
        <taxon>Bacillota</taxon>
        <taxon>Bacilli</taxon>
        <taxon>Lactobacillales</taxon>
        <taxon>Streptococcaceae</taxon>
        <taxon>Streptococcus</taxon>
    </lineage>
</organism>
<feature type="chain" id="PRO_1000074974" description="Elongation factor G">
    <location>
        <begin position="1"/>
        <end position="693"/>
    </location>
</feature>
<feature type="domain" description="tr-type G">
    <location>
        <begin position="8"/>
        <end position="282"/>
    </location>
</feature>
<feature type="binding site" evidence="1">
    <location>
        <begin position="17"/>
        <end position="24"/>
    </location>
    <ligand>
        <name>GTP</name>
        <dbReference type="ChEBI" id="CHEBI:37565"/>
    </ligand>
</feature>
<feature type="binding site" evidence="1">
    <location>
        <begin position="81"/>
        <end position="85"/>
    </location>
    <ligand>
        <name>GTP</name>
        <dbReference type="ChEBI" id="CHEBI:37565"/>
    </ligand>
</feature>
<feature type="binding site" evidence="1">
    <location>
        <begin position="135"/>
        <end position="138"/>
    </location>
    <ligand>
        <name>GTP</name>
        <dbReference type="ChEBI" id="CHEBI:37565"/>
    </ligand>
</feature>
<evidence type="ECO:0000255" key="1">
    <source>
        <dbReference type="HAMAP-Rule" id="MF_00054"/>
    </source>
</evidence>
<comment type="function">
    <text evidence="1">Catalyzes the GTP-dependent ribosomal translocation step during translation elongation. During this step, the ribosome changes from the pre-translocational (PRE) to the post-translocational (POST) state as the newly formed A-site-bound peptidyl-tRNA and P-site-bound deacylated tRNA move to the P and E sites, respectively. Catalyzes the coordinated movement of the two tRNA molecules, the mRNA and conformational changes in the ribosome.</text>
</comment>
<comment type="subcellular location">
    <subcellularLocation>
        <location evidence="1">Cytoplasm</location>
    </subcellularLocation>
</comment>
<comment type="similarity">
    <text evidence="1">Belongs to the TRAFAC class translation factor GTPase superfamily. Classic translation factor GTPase family. EF-G/EF-2 subfamily.</text>
</comment>
<dbReference type="EMBL" id="CP000725">
    <property type="protein sequence ID" value="ABV10659.1"/>
    <property type="molecule type" value="Genomic_DNA"/>
</dbReference>
<dbReference type="RefSeq" id="WP_011999744.1">
    <property type="nucleotide sequence ID" value="NC_009785.1"/>
</dbReference>
<dbReference type="SMR" id="A8AUR6"/>
<dbReference type="STRING" id="467705.SGO_0206"/>
<dbReference type="MoonProt" id="A8AUR6"/>
<dbReference type="KEGG" id="sgo:SGO_0206"/>
<dbReference type="eggNOG" id="COG0480">
    <property type="taxonomic scope" value="Bacteria"/>
</dbReference>
<dbReference type="HOGENOM" id="CLU_002794_4_1_9"/>
<dbReference type="Proteomes" id="UP000001131">
    <property type="component" value="Chromosome"/>
</dbReference>
<dbReference type="GO" id="GO:0005737">
    <property type="term" value="C:cytoplasm"/>
    <property type="evidence" value="ECO:0007669"/>
    <property type="project" value="UniProtKB-SubCell"/>
</dbReference>
<dbReference type="GO" id="GO:0005525">
    <property type="term" value="F:GTP binding"/>
    <property type="evidence" value="ECO:0007669"/>
    <property type="project" value="UniProtKB-UniRule"/>
</dbReference>
<dbReference type="GO" id="GO:0003924">
    <property type="term" value="F:GTPase activity"/>
    <property type="evidence" value="ECO:0007669"/>
    <property type="project" value="InterPro"/>
</dbReference>
<dbReference type="GO" id="GO:0003746">
    <property type="term" value="F:translation elongation factor activity"/>
    <property type="evidence" value="ECO:0007669"/>
    <property type="project" value="UniProtKB-UniRule"/>
</dbReference>
<dbReference type="GO" id="GO:0032790">
    <property type="term" value="P:ribosome disassembly"/>
    <property type="evidence" value="ECO:0007669"/>
    <property type="project" value="TreeGrafter"/>
</dbReference>
<dbReference type="CDD" id="cd01886">
    <property type="entry name" value="EF-G"/>
    <property type="match status" value="1"/>
</dbReference>
<dbReference type="CDD" id="cd16262">
    <property type="entry name" value="EFG_III"/>
    <property type="match status" value="1"/>
</dbReference>
<dbReference type="CDD" id="cd01434">
    <property type="entry name" value="EFG_mtEFG1_IV"/>
    <property type="match status" value="1"/>
</dbReference>
<dbReference type="CDD" id="cd03713">
    <property type="entry name" value="EFG_mtEFG_C"/>
    <property type="match status" value="1"/>
</dbReference>
<dbReference type="CDD" id="cd04088">
    <property type="entry name" value="EFG_mtEFG_II"/>
    <property type="match status" value="1"/>
</dbReference>
<dbReference type="FunFam" id="2.40.30.10:FF:000006">
    <property type="entry name" value="Elongation factor G"/>
    <property type="match status" value="1"/>
</dbReference>
<dbReference type="FunFam" id="3.30.230.10:FF:000003">
    <property type="entry name" value="Elongation factor G"/>
    <property type="match status" value="1"/>
</dbReference>
<dbReference type="FunFam" id="3.30.70.240:FF:000001">
    <property type="entry name" value="Elongation factor G"/>
    <property type="match status" value="1"/>
</dbReference>
<dbReference type="FunFam" id="3.30.70.870:FF:000001">
    <property type="entry name" value="Elongation factor G"/>
    <property type="match status" value="1"/>
</dbReference>
<dbReference type="FunFam" id="3.40.50.300:FF:000029">
    <property type="entry name" value="Elongation factor G"/>
    <property type="match status" value="1"/>
</dbReference>
<dbReference type="Gene3D" id="3.30.230.10">
    <property type="match status" value="1"/>
</dbReference>
<dbReference type="Gene3D" id="3.30.70.240">
    <property type="match status" value="1"/>
</dbReference>
<dbReference type="Gene3D" id="3.30.70.870">
    <property type="entry name" value="Elongation Factor G (Translational Gtpase), domain 3"/>
    <property type="match status" value="1"/>
</dbReference>
<dbReference type="Gene3D" id="3.40.50.300">
    <property type="entry name" value="P-loop containing nucleotide triphosphate hydrolases"/>
    <property type="match status" value="1"/>
</dbReference>
<dbReference type="Gene3D" id="2.40.30.10">
    <property type="entry name" value="Translation factors"/>
    <property type="match status" value="1"/>
</dbReference>
<dbReference type="HAMAP" id="MF_00054_B">
    <property type="entry name" value="EF_G_EF_2_B"/>
    <property type="match status" value="1"/>
</dbReference>
<dbReference type="InterPro" id="IPR041095">
    <property type="entry name" value="EFG_II"/>
</dbReference>
<dbReference type="InterPro" id="IPR009022">
    <property type="entry name" value="EFG_III"/>
</dbReference>
<dbReference type="InterPro" id="IPR035647">
    <property type="entry name" value="EFG_III/V"/>
</dbReference>
<dbReference type="InterPro" id="IPR047872">
    <property type="entry name" value="EFG_IV"/>
</dbReference>
<dbReference type="InterPro" id="IPR035649">
    <property type="entry name" value="EFG_V"/>
</dbReference>
<dbReference type="InterPro" id="IPR000640">
    <property type="entry name" value="EFG_V-like"/>
</dbReference>
<dbReference type="InterPro" id="IPR004161">
    <property type="entry name" value="EFTu-like_2"/>
</dbReference>
<dbReference type="InterPro" id="IPR031157">
    <property type="entry name" value="G_TR_CS"/>
</dbReference>
<dbReference type="InterPro" id="IPR027417">
    <property type="entry name" value="P-loop_NTPase"/>
</dbReference>
<dbReference type="InterPro" id="IPR020568">
    <property type="entry name" value="Ribosomal_Su5_D2-typ_SF"/>
</dbReference>
<dbReference type="InterPro" id="IPR014721">
    <property type="entry name" value="Ribsml_uS5_D2-typ_fold_subgr"/>
</dbReference>
<dbReference type="InterPro" id="IPR005225">
    <property type="entry name" value="Small_GTP-bd"/>
</dbReference>
<dbReference type="InterPro" id="IPR000795">
    <property type="entry name" value="T_Tr_GTP-bd_dom"/>
</dbReference>
<dbReference type="InterPro" id="IPR009000">
    <property type="entry name" value="Transl_B-barrel_sf"/>
</dbReference>
<dbReference type="InterPro" id="IPR004540">
    <property type="entry name" value="Transl_elong_EFG/EF2"/>
</dbReference>
<dbReference type="InterPro" id="IPR005517">
    <property type="entry name" value="Transl_elong_EFG/EF2_IV"/>
</dbReference>
<dbReference type="NCBIfam" id="TIGR00484">
    <property type="entry name" value="EF-G"/>
    <property type="match status" value="1"/>
</dbReference>
<dbReference type="NCBIfam" id="NF009379">
    <property type="entry name" value="PRK12740.1-3"/>
    <property type="match status" value="1"/>
</dbReference>
<dbReference type="NCBIfam" id="NF009381">
    <property type="entry name" value="PRK12740.1-5"/>
    <property type="match status" value="1"/>
</dbReference>
<dbReference type="NCBIfam" id="TIGR00231">
    <property type="entry name" value="small_GTP"/>
    <property type="match status" value="1"/>
</dbReference>
<dbReference type="PANTHER" id="PTHR43261:SF1">
    <property type="entry name" value="RIBOSOME-RELEASING FACTOR 2, MITOCHONDRIAL"/>
    <property type="match status" value="1"/>
</dbReference>
<dbReference type="PANTHER" id="PTHR43261">
    <property type="entry name" value="TRANSLATION ELONGATION FACTOR G-RELATED"/>
    <property type="match status" value="1"/>
</dbReference>
<dbReference type="Pfam" id="PF00679">
    <property type="entry name" value="EFG_C"/>
    <property type="match status" value="1"/>
</dbReference>
<dbReference type="Pfam" id="PF14492">
    <property type="entry name" value="EFG_III"/>
    <property type="match status" value="1"/>
</dbReference>
<dbReference type="Pfam" id="PF03764">
    <property type="entry name" value="EFG_IV"/>
    <property type="match status" value="1"/>
</dbReference>
<dbReference type="Pfam" id="PF00009">
    <property type="entry name" value="GTP_EFTU"/>
    <property type="match status" value="1"/>
</dbReference>
<dbReference type="Pfam" id="PF03144">
    <property type="entry name" value="GTP_EFTU_D2"/>
    <property type="match status" value="1"/>
</dbReference>
<dbReference type="PRINTS" id="PR00315">
    <property type="entry name" value="ELONGATNFCT"/>
</dbReference>
<dbReference type="SMART" id="SM00838">
    <property type="entry name" value="EFG_C"/>
    <property type="match status" value="1"/>
</dbReference>
<dbReference type="SMART" id="SM00889">
    <property type="entry name" value="EFG_IV"/>
    <property type="match status" value="1"/>
</dbReference>
<dbReference type="SUPFAM" id="SSF54980">
    <property type="entry name" value="EF-G C-terminal domain-like"/>
    <property type="match status" value="2"/>
</dbReference>
<dbReference type="SUPFAM" id="SSF52540">
    <property type="entry name" value="P-loop containing nucleoside triphosphate hydrolases"/>
    <property type="match status" value="1"/>
</dbReference>
<dbReference type="SUPFAM" id="SSF54211">
    <property type="entry name" value="Ribosomal protein S5 domain 2-like"/>
    <property type="match status" value="1"/>
</dbReference>
<dbReference type="SUPFAM" id="SSF50447">
    <property type="entry name" value="Translation proteins"/>
    <property type="match status" value="1"/>
</dbReference>
<dbReference type="PROSITE" id="PS00301">
    <property type="entry name" value="G_TR_1"/>
    <property type="match status" value="1"/>
</dbReference>
<dbReference type="PROSITE" id="PS51722">
    <property type="entry name" value="G_TR_2"/>
    <property type="match status" value="1"/>
</dbReference>